<comment type="PTM">
    <text evidence="1">The N-terminus is cleaved by ribosomal processing cysteine protease Prp.</text>
</comment>
<comment type="similarity">
    <text evidence="2">Belongs to the bacterial ribosomal protein bL27 family.</text>
</comment>
<evidence type="ECO:0000250" key="1">
    <source>
        <dbReference type="UniProtKB" id="Q2FXT0"/>
    </source>
</evidence>
<evidence type="ECO:0000255" key="2">
    <source>
        <dbReference type="HAMAP-Rule" id="MF_00539"/>
    </source>
</evidence>
<evidence type="ECO:0000305" key="3"/>
<dbReference type="EMBL" id="AM422018">
    <property type="protein sequence ID" value="CAM11926.1"/>
    <property type="molecule type" value="Genomic_DNA"/>
</dbReference>
<dbReference type="SMR" id="B1VAF3"/>
<dbReference type="STRING" id="59748.PA0592"/>
<dbReference type="KEGG" id="pal:PA0592"/>
<dbReference type="eggNOG" id="COG0211">
    <property type="taxonomic scope" value="Bacteria"/>
</dbReference>
<dbReference type="Proteomes" id="UP000008323">
    <property type="component" value="Chromosome"/>
</dbReference>
<dbReference type="GO" id="GO:0022625">
    <property type="term" value="C:cytosolic large ribosomal subunit"/>
    <property type="evidence" value="ECO:0007669"/>
    <property type="project" value="TreeGrafter"/>
</dbReference>
<dbReference type="GO" id="GO:0003735">
    <property type="term" value="F:structural constituent of ribosome"/>
    <property type="evidence" value="ECO:0007669"/>
    <property type="project" value="InterPro"/>
</dbReference>
<dbReference type="GO" id="GO:0006412">
    <property type="term" value="P:translation"/>
    <property type="evidence" value="ECO:0007669"/>
    <property type="project" value="UniProtKB-UniRule"/>
</dbReference>
<dbReference type="FunFam" id="2.40.50.100:FF:000004">
    <property type="entry name" value="50S ribosomal protein L27"/>
    <property type="match status" value="1"/>
</dbReference>
<dbReference type="Gene3D" id="2.40.50.100">
    <property type="match status" value="1"/>
</dbReference>
<dbReference type="HAMAP" id="MF_00539">
    <property type="entry name" value="Ribosomal_bL27"/>
    <property type="match status" value="1"/>
</dbReference>
<dbReference type="InterPro" id="IPR001684">
    <property type="entry name" value="Ribosomal_bL27"/>
</dbReference>
<dbReference type="InterPro" id="IPR018261">
    <property type="entry name" value="Ribosomal_bL27_CS"/>
</dbReference>
<dbReference type="NCBIfam" id="TIGR00062">
    <property type="entry name" value="L27"/>
    <property type="match status" value="1"/>
</dbReference>
<dbReference type="PANTHER" id="PTHR15893:SF0">
    <property type="entry name" value="LARGE RIBOSOMAL SUBUNIT PROTEIN BL27M"/>
    <property type="match status" value="1"/>
</dbReference>
<dbReference type="PANTHER" id="PTHR15893">
    <property type="entry name" value="RIBOSOMAL PROTEIN L27"/>
    <property type="match status" value="1"/>
</dbReference>
<dbReference type="Pfam" id="PF01016">
    <property type="entry name" value="Ribosomal_L27"/>
    <property type="match status" value="1"/>
</dbReference>
<dbReference type="PRINTS" id="PR00063">
    <property type="entry name" value="RIBOSOMALL27"/>
</dbReference>
<dbReference type="SUPFAM" id="SSF110324">
    <property type="entry name" value="Ribosomal L27 protein-like"/>
    <property type="match status" value="1"/>
</dbReference>
<dbReference type="PROSITE" id="PS00831">
    <property type="entry name" value="RIBOSOMAL_L27"/>
    <property type="match status" value="1"/>
</dbReference>
<organism>
    <name type="scientific">Phytoplasma australiense</name>
    <dbReference type="NCBI Taxonomy" id="59748"/>
    <lineage>
        <taxon>Bacteria</taxon>
        <taxon>Bacillati</taxon>
        <taxon>Mycoplasmatota</taxon>
        <taxon>Mollicutes</taxon>
        <taxon>Acholeplasmatales</taxon>
        <taxon>Acholeplasmataceae</taxon>
        <taxon>Candidatus Phytoplasma</taxon>
        <taxon>16SrXII (Stolbur group)</taxon>
    </lineage>
</organism>
<accession>B1VAF3</accession>
<reference key="1">
    <citation type="journal article" date="2008" name="J. Bacteriol.">
        <title>Comparative genome analysis of 'Candidatus Phytoplasma australiense' (subgroup tuf-Australia I; rp-A) and 'Ca. Phytoplasma asteris' strains OY-M and AY-WB.</title>
        <authorList>
            <person name="Tran-Nguyen L.T."/>
            <person name="Kube M."/>
            <person name="Schneider B."/>
            <person name="Reinhardt R."/>
            <person name="Gibb K.S."/>
        </authorList>
    </citation>
    <scope>NUCLEOTIDE SEQUENCE [LARGE SCALE GENOMIC DNA]</scope>
</reference>
<feature type="propeptide" id="PRO_0000459925" evidence="1">
    <location>
        <begin position="1"/>
        <end position="10"/>
    </location>
</feature>
<feature type="chain" id="PRO_1000128787" description="Large ribosomal subunit protein bL27">
    <location>
        <begin position="11"/>
        <end position="93"/>
    </location>
</feature>
<sequence length="93" mass="10142">MLLKLQIQLFASKKGAGSTRNGRDSHSKRLGAKLSDGQIAKAGSIIYRQRGTKIYPGFNVGLGGDDTLFAKISGIIKYESKRGNRKKVSVYPQ</sequence>
<protein>
    <recommendedName>
        <fullName evidence="2">Large ribosomal subunit protein bL27</fullName>
    </recommendedName>
    <alternativeName>
        <fullName evidence="3">50S ribosomal protein L27</fullName>
    </alternativeName>
</protein>
<keyword id="KW-1185">Reference proteome</keyword>
<keyword id="KW-0687">Ribonucleoprotein</keyword>
<keyword id="KW-0689">Ribosomal protein</keyword>
<proteinExistence type="inferred from homology"/>
<name>RL27_PHYAS</name>
<gene>
    <name evidence="2" type="primary">rpmA</name>
    <name type="ordered locus">PA0592</name>
</gene>